<feature type="chain" id="PRO_0000114024" description="Glutamyl-tRNA reductase">
    <location>
        <begin position="1"/>
        <end position="418"/>
    </location>
</feature>
<feature type="active site" description="Nucleophile" evidence="1">
    <location>
        <position position="50"/>
    </location>
</feature>
<feature type="binding site" evidence="1">
    <location>
        <begin position="49"/>
        <end position="52"/>
    </location>
    <ligand>
        <name>substrate</name>
    </ligand>
</feature>
<feature type="binding site" evidence="1">
    <location>
        <position position="109"/>
    </location>
    <ligand>
        <name>substrate</name>
    </ligand>
</feature>
<feature type="binding site" evidence="1">
    <location>
        <begin position="114"/>
        <end position="116"/>
    </location>
    <ligand>
        <name>substrate</name>
    </ligand>
</feature>
<feature type="binding site" evidence="1">
    <location>
        <position position="120"/>
    </location>
    <ligand>
        <name>substrate</name>
    </ligand>
</feature>
<feature type="binding site" evidence="1">
    <location>
        <begin position="189"/>
        <end position="194"/>
    </location>
    <ligand>
        <name>NADP(+)</name>
        <dbReference type="ChEBI" id="CHEBI:58349"/>
    </ligand>
</feature>
<feature type="site" description="Important for activity" evidence="1">
    <location>
        <position position="99"/>
    </location>
</feature>
<keyword id="KW-0521">NADP</keyword>
<keyword id="KW-0560">Oxidoreductase</keyword>
<keyword id="KW-0627">Porphyrin biosynthesis</keyword>
<keyword id="KW-1185">Reference proteome</keyword>
<accession>P0A6X2</accession>
<accession>P13580</accession>
<accession>Q59405</accession>
<name>HEM1_ECO57</name>
<reference key="1">
    <citation type="journal article" date="2001" name="Nature">
        <title>Genome sequence of enterohaemorrhagic Escherichia coli O157:H7.</title>
        <authorList>
            <person name="Perna N.T."/>
            <person name="Plunkett G. III"/>
            <person name="Burland V."/>
            <person name="Mau B."/>
            <person name="Glasner J.D."/>
            <person name="Rose D.J."/>
            <person name="Mayhew G.F."/>
            <person name="Evans P.S."/>
            <person name="Gregor J."/>
            <person name="Kirkpatrick H.A."/>
            <person name="Posfai G."/>
            <person name="Hackett J."/>
            <person name="Klink S."/>
            <person name="Boutin A."/>
            <person name="Shao Y."/>
            <person name="Miller L."/>
            <person name="Grotbeck E.J."/>
            <person name="Davis N.W."/>
            <person name="Lim A."/>
            <person name="Dimalanta E.T."/>
            <person name="Potamousis K."/>
            <person name="Apodaca J."/>
            <person name="Anantharaman T.S."/>
            <person name="Lin J."/>
            <person name="Yen G."/>
            <person name="Schwartz D.C."/>
            <person name="Welch R.A."/>
            <person name="Blattner F.R."/>
        </authorList>
    </citation>
    <scope>NUCLEOTIDE SEQUENCE [LARGE SCALE GENOMIC DNA]</scope>
    <source>
        <strain>O157:H7 / EDL933 / ATCC 700927 / EHEC</strain>
    </source>
</reference>
<reference key="2">
    <citation type="journal article" date="2001" name="DNA Res.">
        <title>Complete genome sequence of enterohemorrhagic Escherichia coli O157:H7 and genomic comparison with a laboratory strain K-12.</title>
        <authorList>
            <person name="Hayashi T."/>
            <person name="Makino K."/>
            <person name="Ohnishi M."/>
            <person name="Kurokawa K."/>
            <person name="Ishii K."/>
            <person name="Yokoyama K."/>
            <person name="Han C.-G."/>
            <person name="Ohtsubo E."/>
            <person name="Nakayama K."/>
            <person name="Murata T."/>
            <person name="Tanaka M."/>
            <person name="Tobe T."/>
            <person name="Iida T."/>
            <person name="Takami H."/>
            <person name="Honda T."/>
            <person name="Sasakawa C."/>
            <person name="Ogasawara N."/>
            <person name="Yasunaga T."/>
            <person name="Kuhara S."/>
            <person name="Shiba T."/>
            <person name="Hattori M."/>
            <person name="Shinagawa H."/>
        </authorList>
    </citation>
    <scope>NUCLEOTIDE SEQUENCE [LARGE SCALE GENOMIC DNA]</scope>
    <source>
        <strain>O157:H7 / Sakai / RIMD 0509952 / EHEC</strain>
    </source>
</reference>
<sequence length="418" mass="46307">MTLLALGINHKTAPVSLRERVSFSPDKLDQALDSLLAQPMVQGGVVLSTCNRTELYLSVEEQDNLQEALIRWLCDYHNLNEEDLRKSLYWHQDNDAVSHLMRVASGLDSLVLGEPQILGQVKKAFADSQKGHMKASELERMFQKSFSVAKRVRTETDIGASAVSVAFAACTLARQIFESLSTVTVLLVGAGETIELVARHLREHKVQKMIIANRTRERAQILADEVGAEVIALSDIDERLREADIIISSTASPLPIIGKGMVERALKSRRNQPMLLVDIAVPRDVEPEVGKLANAYLYSVDDLQSIISHNLAQRKAAAVEAETIVAQETSEFMAWLRAQSASETIREYRSQAEQVRDELTAKALAALEQGGDAQAIMQDLAWKLTNRLIHAPTKSLQQAARDGDNERLNILRDSLGLE</sequence>
<gene>
    <name evidence="1" type="primary">hemA</name>
    <name type="ordered locus">Z1981</name>
    <name type="ordered locus">ECs1715</name>
</gene>
<protein>
    <recommendedName>
        <fullName evidence="1">Glutamyl-tRNA reductase</fullName>
        <shortName evidence="1">GluTR</shortName>
        <ecNumber evidence="1">1.2.1.70</ecNumber>
    </recommendedName>
</protein>
<proteinExistence type="inferred from homology"/>
<comment type="function">
    <text evidence="1">Catalyzes the NADPH-dependent reduction of glutamyl-tRNA(Glu) to glutamate 1-semialdehyde (GSA).</text>
</comment>
<comment type="catalytic activity">
    <reaction evidence="1">
        <text>(S)-4-amino-5-oxopentanoate + tRNA(Glu) + NADP(+) = L-glutamyl-tRNA(Glu) + NADPH + H(+)</text>
        <dbReference type="Rhea" id="RHEA:12344"/>
        <dbReference type="Rhea" id="RHEA-COMP:9663"/>
        <dbReference type="Rhea" id="RHEA-COMP:9680"/>
        <dbReference type="ChEBI" id="CHEBI:15378"/>
        <dbReference type="ChEBI" id="CHEBI:57501"/>
        <dbReference type="ChEBI" id="CHEBI:57783"/>
        <dbReference type="ChEBI" id="CHEBI:58349"/>
        <dbReference type="ChEBI" id="CHEBI:78442"/>
        <dbReference type="ChEBI" id="CHEBI:78520"/>
        <dbReference type="EC" id="1.2.1.70"/>
    </reaction>
</comment>
<comment type="pathway">
    <text evidence="1">Porphyrin-containing compound metabolism; protoporphyrin-IX biosynthesis; 5-aminolevulinate from L-glutamyl-tRNA(Glu): step 1/2.</text>
</comment>
<comment type="subunit">
    <text evidence="1">Homodimer.</text>
</comment>
<comment type="domain">
    <text evidence="1">Possesses an unusual extended V-shaped dimeric structure with each monomer consisting of three distinct domains arranged along a curved 'spinal' alpha-helix. The N-terminal catalytic domain specifically recognizes the glutamate moiety of the substrate. The second domain is the NADPH-binding domain, and the third C-terminal domain is responsible for dimerization.</text>
</comment>
<comment type="miscellaneous">
    <text evidence="1">During catalysis, the active site Cys acts as a nucleophile attacking the alpha-carbonyl group of tRNA-bound glutamate with the formation of a thioester intermediate between enzyme and glutamate, and the concomitant release of tRNA(Glu). The thioester intermediate is finally reduced by direct hydride transfer from NADPH, to form the product GSA.</text>
</comment>
<comment type="similarity">
    <text evidence="1">Belongs to the glutamyl-tRNA reductase family.</text>
</comment>
<evidence type="ECO:0000255" key="1">
    <source>
        <dbReference type="HAMAP-Rule" id="MF_00087"/>
    </source>
</evidence>
<dbReference type="EC" id="1.2.1.70" evidence="1"/>
<dbReference type="EMBL" id="AE005174">
    <property type="protein sequence ID" value="AAG56068.1"/>
    <property type="molecule type" value="Genomic_DNA"/>
</dbReference>
<dbReference type="EMBL" id="BA000007">
    <property type="protein sequence ID" value="BAB35138.1"/>
    <property type="molecule type" value="Genomic_DNA"/>
</dbReference>
<dbReference type="PIR" id="C90843">
    <property type="entry name" value="C90843"/>
</dbReference>
<dbReference type="RefSeq" id="NP_309742.1">
    <property type="nucleotide sequence ID" value="NC_002695.1"/>
</dbReference>
<dbReference type="RefSeq" id="WP_001299679.1">
    <property type="nucleotide sequence ID" value="NZ_VOAI01000038.1"/>
</dbReference>
<dbReference type="SMR" id="P0A6X2"/>
<dbReference type="STRING" id="155864.Z1981"/>
<dbReference type="GeneID" id="913148"/>
<dbReference type="KEGG" id="ece:Z1981"/>
<dbReference type="KEGG" id="ecs:ECs_1715"/>
<dbReference type="PATRIC" id="fig|386585.9.peg.1813"/>
<dbReference type="eggNOG" id="COG0373">
    <property type="taxonomic scope" value="Bacteria"/>
</dbReference>
<dbReference type="HOGENOM" id="CLU_035113_2_2_6"/>
<dbReference type="OMA" id="FAFKCAA"/>
<dbReference type="UniPathway" id="UPA00251">
    <property type="reaction ID" value="UER00316"/>
</dbReference>
<dbReference type="Proteomes" id="UP000000558">
    <property type="component" value="Chromosome"/>
</dbReference>
<dbReference type="Proteomes" id="UP000002519">
    <property type="component" value="Chromosome"/>
</dbReference>
<dbReference type="GO" id="GO:0008883">
    <property type="term" value="F:glutamyl-tRNA reductase activity"/>
    <property type="evidence" value="ECO:0007669"/>
    <property type="project" value="UniProtKB-UniRule"/>
</dbReference>
<dbReference type="GO" id="GO:0050661">
    <property type="term" value="F:NADP binding"/>
    <property type="evidence" value="ECO:0007669"/>
    <property type="project" value="InterPro"/>
</dbReference>
<dbReference type="GO" id="GO:0019353">
    <property type="term" value="P:protoporphyrinogen IX biosynthetic process from glutamate"/>
    <property type="evidence" value="ECO:0007669"/>
    <property type="project" value="TreeGrafter"/>
</dbReference>
<dbReference type="CDD" id="cd05213">
    <property type="entry name" value="NAD_bind_Glutamyl_tRNA_reduct"/>
    <property type="match status" value="1"/>
</dbReference>
<dbReference type="FunFam" id="3.30.460.30:FF:000001">
    <property type="entry name" value="Glutamyl-tRNA reductase"/>
    <property type="match status" value="1"/>
</dbReference>
<dbReference type="FunFam" id="3.40.50.720:FF:000031">
    <property type="entry name" value="Glutamyl-tRNA reductase"/>
    <property type="match status" value="1"/>
</dbReference>
<dbReference type="Gene3D" id="3.30.460.30">
    <property type="entry name" value="Glutamyl-tRNA reductase, N-terminal domain"/>
    <property type="match status" value="1"/>
</dbReference>
<dbReference type="Gene3D" id="3.40.50.720">
    <property type="entry name" value="NAD(P)-binding Rossmann-like Domain"/>
    <property type="match status" value="1"/>
</dbReference>
<dbReference type="HAMAP" id="MF_00087">
    <property type="entry name" value="Glu_tRNA_reductase"/>
    <property type="match status" value="1"/>
</dbReference>
<dbReference type="InterPro" id="IPR000343">
    <property type="entry name" value="4pyrrol_synth_GluRdtase"/>
</dbReference>
<dbReference type="InterPro" id="IPR015896">
    <property type="entry name" value="4pyrrol_synth_GluRdtase_dimer"/>
</dbReference>
<dbReference type="InterPro" id="IPR015895">
    <property type="entry name" value="4pyrrol_synth_GluRdtase_N"/>
</dbReference>
<dbReference type="InterPro" id="IPR018214">
    <property type="entry name" value="GluRdtase_CS"/>
</dbReference>
<dbReference type="InterPro" id="IPR036453">
    <property type="entry name" value="GluRdtase_dimer_dom_sf"/>
</dbReference>
<dbReference type="InterPro" id="IPR036343">
    <property type="entry name" value="GluRdtase_N_sf"/>
</dbReference>
<dbReference type="InterPro" id="IPR036291">
    <property type="entry name" value="NAD(P)-bd_dom_sf"/>
</dbReference>
<dbReference type="InterPro" id="IPR006151">
    <property type="entry name" value="Shikm_DH/Glu-tRNA_Rdtase"/>
</dbReference>
<dbReference type="NCBIfam" id="TIGR01035">
    <property type="entry name" value="hemA"/>
    <property type="match status" value="1"/>
</dbReference>
<dbReference type="PANTHER" id="PTHR43013">
    <property type="entry name" value="GLUTAMYL-TRNA REDUCTASE"/>
    <property type="match status" value="1"/>
</dbReference>
<dbReference type="PANTHER" id="PTHR43013:SF1">
    <property type="entry name" value="GLUTAMYL-TRNA REDUCTASE"/>
    <property type="match status" value="1"/>
</dbReference>
<dbReference type="Pfam" id="PF00745">
    <property type="entry name" value="GlutR_dimer"/>
    <property type="match status" value="1"/>
</dbReference>
<dbReference type="Pfam" id="PF05201">
    <property type="entry name" value="GlutR_N"/>
    <property type="match status" value="1"/>
</dbReference>
<dbReference type="Pfam" id="PF01488">
    <property type="entry name" value="Shikimate_DH"/>
    <property type="match status" value="1"/>
</dbReference>
<dbReference type="PIRSF" id="PIRSF000445">
    <property type="entry name" value="4pyrrol_synth_GluRdtase"/>
    <property type="match status" value="1"/>
</dbReference>
<dbReference type="SUPFAM" id="SSF69742">
    <property type="entry name" value="Glutamyl tRNA-reductase catalytic, N-terminal domain"/>
    <property type="match status" value="1"/>
</dbReference>
<dbReference type="SUPFAM" id="SSF69075">
    <property type="entry name" value="Glutamyl tRNA-reductase dimerization domain"/>
    <property type="match status" value="1"/>
</dbReference>
<dbReference type="SUPFAM" id="SSF51735">
    <property type="entry name" value="NAD(P)-binding Rossmann-fold domains"/>
    <property type="match status" value="1"/>
</dbReference>
<dbReference type="PROSITE" id="PS00747">
    <property type="entry name" value="GLUTR"/>
    <property type="match status" value="1"/>
</dbReference>
<organism>
    <name type="scientific">Escherichia coli O157:H7</name>
    <dbReference type="NCBI Taxonomy" id="83334"/>
    <lineage>
        <taxon>Bacteria</taxon>
        <taxon>Pseudomonadati</taxon>
        <taxon>Pseudomonadota</taxon>
        <taxon>Gammaproteobacteria</taxon>
        <taxon>Enterobacterales</taxon>
        <taxon>Enterobacteriaceae</taxon>
        <taxon>Escherichia</taxon>
    </lineage>
</organism>